<reference key="1">
    <citation type="submission" date="2007-02" db="EMBL/GenBank/DDBJ databases">
        <title>Complete sequence of Pyrobaculum calidifontis JCM 11548.</title>
        <authorList>
            <consortium name="US DOE Joint Genome Institute"/>
            <person name="Copeland A."/>
            <person name="Lucas S."/>
            <person name="Lapidus A."/>
            <person name="Barry K."/>
            <person name="Glavina del Rio T."/>
            <person name="Dalin E."/>
            <person name="Tice H."/>
            <person name="Pitluck S."/>
            <person name="Chain P."/>
            <person name="Malfatti S."/>
            <person name="Shin M."/>
            <person name="Vergez L."/>
            <person name="Schmutz J."/>
            <person name="Larimer F."/>
            <person name="Land M."/>
            <person name="Hauser L."/>
            <person name="Kyrpides N."/>
            <person name="Mikhailova N."/>
            <person name="Cozen A.E."/>
            <person name="Fitz-Gibbon S.T."/>
            <person name="House C.H."/>
            <person name="Saltikov C."/>
            <person name="Lowe T.M."/>
            <person name="Richardson P."/>
        </authorList>
    </citation>
    <scope>NUCLEOTIDE SEQUENCE [LARGE SCALE GENOMIC DNA]</scope>
    <source>
        <strain>DSM 21063 / JCM 11548 / VA1</strain>
    </source>
</reference>
<feature type="chain" id="PRO_1000045795" description="Adenosylcobinamide-GDP ribazoletransferase">
    <location>
        <begin position="1"/>
        <end position="217"/>
    </location>
</feature>
<feature type="transmembrane region" description="Helical" evidence="1">
    <location>
        <begin position="6"/>
        <end position="26"/>
    </location>
</feature>
<feature type="transmembrane region" description="Helical" evidence="1">
    <location>
        <begin position="39"/>
        <end position="61"/>
    </location>
</feature>
<feature type="transmembrane region" description="Helical" evidence="1">
    <location>
        <begin position="95"/>
        <end position="115"/>
    </location>
</feature>
<feature type="transmembrane region" description="Helical" evidence="1">
    <location>
        <begin position="116"/>
        <end position="136"/>
    </location>
</feature>
<feature type="transmembrane region" description="Helical" evidence="1">
    <location>
        <begin position="162"/>
        <end position="182"/>
    </location>
</feature>
<protein>
    <recommendedName>
        <fullName evidence="1">Adenosylcobinamide-GDP ribazoletransferase</fullName>
        <ecNumber evidence="1">2.7.8.26</ecNumber>
    </recommendedName>
    <alternativeName>
        <fullName evidence="1">Cobalamin synthase</fullName>
    </alternativeName>
    <alternativeName>
        <fullName evidence="1">Cobalamin-5'-phosphate synthase</fullName>
    </alternativeName>
</protein>
<proteinExistence type="inferred from homology"/>
<comment type="function">
    <text evidence="1">Joins adenosylcobinamide-GDP and alpha-ribazole to generate adenosylcobalamin (Ado-cobalamin). Also synthesizes adenosylcobalamin 5'-phosphate from adenosylcobinamide-GDP and alpha-ribazole 5'-phosphate.</text>
</comment>
<comment type="catalytic activity">
    <reaction evidence="1">
        <text>alpha-ribazole + adenosylcob(III)inamide-GDP = adenosylcob(III)alamin + GMP + H(+)</text>
        <dbReference type="Rhea" id="RHEA:16049"/>
        <dbReference type="ChEBI" id="CHEBI:10329"/>
        <dbReference type="ChEBI" id="CHEBI:15378"/>
        <dbReference type="ChEBI" id="CHEBI:18408"/>
        <dbReference type="ChEBI" id="CHEBI:58115"/>
        <dbReference type="ChEBI" id="CHEBI:60487"/>
        <dbReference type="EC" id="2.7.8.26"/>
    </reaction>
</comment>
<comment type="catalytic activity">
    <reaction evidence="1">
        <text>alpha-ribazole 5'-phosphate + adenosylcob(III)inamide-GDP = adenosylcob(III)alamin 5'-phosphate + GMP + H(+)</text>
        <dbReference type="Rhea" id="RHEA:23560"/>
        <dbReference type="ChEBI" id="CHEBI:15378"/>
        <dbReference type="ChEBI" id="CHEBI:57918"/>
        <dbReference type="ChEBI" id="CHEBI:58115"/>
        <dbReference type="ChEBI" id="CHEBI:60487"/>
        <dbReference type="ChEBI" id="CHEBI:60493"/>
        <dbReference type="EC" id="2.7.8.26"/>
    </reaction>
</comment>
<comment type="cofactor">
    <cofactor evidence="1">
        <name>Mg(2+)</name>
        <dbReference type="ChEBI" id="CHEBI:18420"/>
    </cofactor>
</comment>
<comment type="pathway">
    <text evidence="1">Cofactor biosynthesis; adenosylcobalamin biosynthesis; adenosylcobalamin from cob(II)yrinate a,c-diamide: step 7/7.</text>
</comment>
<comment type="subcellular location">
    <subcellularLocation>
        <location evidence="1">Cell membrane</location>
        <topology evidence="1">Multi-pass membrane protein</topology>
    </subcellularLocation>
</comment>
<comment type="similarity">
    <text evidence="1">Belongs to the CobS family.</text>
</comment>
<name>COBS_PYRCJ</name>
<organism>
    <name type="scientific">Pyrobaculum calidifontis (strain DSM 21063 / JCM 11548 / VA1)</name>
    <dbReference type="NCBI Taxonomy" id="410359"/>
    <lineage>
        <taxon>Archaea</taxon>
        <taxon>Thermoproteota</taxon>
        <taxon>Thermoprotei</taxon>
        <taxon>Thermoproteales</taxon>
        <taxon>Thermoproteaceae</taxon>
        <taxon>Pyrobaculum</taxon>
    </lineage>
</organism>
<accession>A3MWD7</accession>
<sequence>MQCLRALLSFFTIIPAGVAKLDFKCAWALPYVVPPLVAGPAAAALWLGASPHVAYLLLLLMTGLNHLDGLADVADALMVRDRERARAVLEDPRRGTGGIFAVVATYAVATASTASPLQLLLAEVFSKALIVTVAAFSKPFKPGLGALFIDGARSTWPLALPALAVIICLRPAATLAALAVALALYAVAYQHLGGANGDVFGYLLEVSRVAYIVTWHM</sequence>
<keyword id="KW-1003">Cell membrane</keyword>
<keyword id="KW-0169">Cobalamin biosynthesis</keyword>
<keyword id="KW-0460">Magnesium</keyword>
<keyword id="KW-0472">Membrane</keyword>
<keyword id="KW-0808">Transferase</keyword>
<keyword id="KW-0812">Transmembrane</keyword>
<keyword id="KW-1133">Transmembrane helix</keyword>
<evidence type="ECO:0000255" key="1">
    <source>
        <dbReference type="HAMAP-Rule" id="MF_00719"/>
    </source>
</evidence>
<gene>
    <name evidence="1" type="primary">cobS</name>
    <name type="ordered locus">Pcal_1535</name>
</gene>
<dbReference type="EC" id="2.7.8.26" evidence="1"/>
<dbReference type="EMBL" id="CP000561">
    <property type="protein sequence ID" value="ABO08954.1"/>
    <property type="molecule type" value="Genomic_DNA"/>
</dbReference>
<dbReference type="RefSeq" id="WP_011850212.1">
    <property type="nucleotide sequence ID" value="NC_009073.1"/>
</dbReference>
<dbReference type="STRING" id="410359.Pcal_1535"/>
<dbReference type="GeneID" id="4909446"/>
<dbReference type="KEGG" id="pcl:Pcal_1535"/>
<dbReference type="eggNOG" id="arCOG04338">
    <property type="taxonomic scope" value="Archaea"/>
</dbReference>
<dbReference type="HOGENOM" id="CLU_057426_2_0_2"/>
<dbReference type="OrthoDB" id="11748at2157"/>
<dbReference type="UniPathway" id="UPA00148">
    <property type="reaction ID" value="UER00238"/>
</dbReference>
<dbReference type="Proteomes" id="UP000001431">
    <property type="component" value="Chromosome"/>
</dbReference>
<dbReference type="GO" id="GO:0005886">
    <property type="term" value="C:plasma membrane"/>
    <property type="evidence" value="ECO:0007669"/>
    <property type="project" value="UniProtKB-SubCell"/>
</dbReference>
<dbReference type="GO" id="GO:0051073">
    <property type="term" value="F:adenosylcobinamide-GDP ribazoletransferase activity"/>
    <property type="evidence" value="ECO:0007669"/>
    <property type="project" value="UniProtKB-UniRule"/>
</dbReference>
<dbReference type="GO" id="GO:0008818">
    <property type="term" value="F:cobalamin 5'-phosphate synthase activity"/>
    <property type="evidence" value="ECO:0007669"/>
    <property type="project" value="UniProtKB-UniRule"/>
</dbReference>
<dbReference type="GO" id="GO:0009236">
    <property type="term" value="P:cobalamin biosynthetic process"/>
    <property type="evidence" value="ECO:0007669"/>
    <property type="project" value="UniProtKB-UniRule"/>
</dbReference>
<dbReference type="HAMAP" id="MF_00719">
    <property type="entry name" value="CobS"/>
    <property type="match status" value="1"/>
</dbReference>
<dbReference type="InterPro" id="IPR003805">
    <property type="entry name" value="CobS"/>
</dbReference>
<dbReference type="PANTHER" id="PTHR34148">
    <property type="entry name" value="ADENOSYLCOBINAMIDE-GDP RIBAZOLETRANSFERASE"/>
    <property type="match status" value="1"/>
</dbReference>
<dbReference type="PANTHER" id="PTHR34148:SF1">
    <property type="entry name" value="ADENOSYLCOBINAMIDE-GDP RIBAZOLETRANSFERASE"/>
    <property type="match status" value="1"/>
</dbReference>
<dbReference type="Pfam" id="PF02654">
    <property type="entry name" value="CobS"/>
    <property type="match status" value="1"/>
</dbReference>